<dbReference type="EC" id="2.7.4.22" evidence="1"/>
<dbReference type="EMBL" id="CP000469">
    <property type="protein sequence ID" value="ABK49040.1"/>
    <property type="molecule type" value="Genomic_DNA"/>
</dbReference>
<dbReference type="RefSeq" id="WP_011717690.1">
    <property type="nucleotide sequence ID" value="NC_008577.1"/>
</dbReference>
<dbReference type="SMR" id="A0KZ21"/>
<dbReference type="STRING" id="94122.Shewana3_2813"/>
<dbReference type="GeneID" id="94728751"/>
<dbReference type="KEGG" id="shn:Shewana3_2813"/>
<dbReference type="eggNOG" id="COG0528">
    <property type="taxonomic scope" value="Bacteria"/>
</dbReference>
<dbReference type="HOGENOM" id="CLU_033861_0_0_6"/>
<dbReference type="OrthoDB" id="9807458at2"/>
<dbReference type="UniPathway" id="UPA00159">
    <property type="reaction ID" value="UER00275"/>
</dbReference>
<dbReference type="Proteomes" id="UP000002589">
    <property type="component" value="Chromosome"/>
</dbReference>
<dbReference type="GO" id="GO:0005829">
    <property type="term" value="C:cytosol"/>
    <property type="evidence" value="ECO:0007669"/>
    <property type="project" value="TreeGrafter"/>
</dbReference>
<dbReference type="GO" id="GO:0005524">
    <property type="term" value="F:ATP binding"/>
    <property type="evidence" value="ECO:0007669"/>
    <property type="project" value="UniProtKB-KW"/>
</dbReference>
<dbReference type="GO" id="GO:0033862">
    <property type="term" value="F:UMP kinase activity"/>
    <property type="evidence" value="ECO:0007669"/>
    <property type="project" value="UniProtKB-EC"/>
</dbReference>
<dbReference type="GO" id="GO:0044210">
    <property type="term" value="P:'de novo' CTP biosynthetic process"/>
    <property type="evidence" value="ECO:0007669"/>
    <property type="project" value="UniProtKB-UniRule"/>
</dbReference>
<dbReference type="GO" id="GO:0006225">
    <property type="term" value="P:UDP biosynthetic process"/>
    <property type="evidence" value="ECO:0007669"/>
    <property type="project" value="TreeGrafter"/>
</dbReference>
<dbReference type="CDD" id="cd04254">
    <property type="entry name" value="AAK_UMPK-PyrH-Ec"/>
    <property type="match status" value="1"/>
</dbReference>
<dbReference type="FunFam" id="3.40.1160.10:FF:000001">
    <property type="entry name" value="Uridylate kinase"/>
    <property type="match status" value="1"/>
</dbReference>
<dbReference type="Gene3D" id="3.40.1160.10">
    <property type="entry name" value="Acetylglutamate kinase-like"/>
    <property type="match status" value="1"/>
</dbReference>
<dbReference type="HAMAP" id="MF_01220_B">
    <property type="entry name" value="PyrH_B"/>
    <property type="match status" value="1"/>
</dbReference>
<dbReference type="InterPro" id="IPR036393">
    <property type="entry name" value="AceGlu_kinase-like_sf"/>
</dbReference>
<dbReference type="InterPro" id="IPR001048">
    <property type="entry name" value="Asp/Glu/Uridylate_kinase"/>
</dbReference>
<dbReference type="InterPro" id="IPR011817">
    <property type="entry name" value="Uridylate_kinase"/>
</dbReference>
<dbReference type="InterPro" id="IPR015963">
    <property type="entry name" value="Uridylate_kinase_bac"/>
</dbReference>
<dbReference type="NCBIfam" id="TIGR02075">
    <property type="entry name" value="pyrH_bact"/>
    <property type="match status" value="1"/>
</dbReference>
<dbReference type="PANTHER" id="PTHR42833">
    <property type="entry name" value="URIDYLATE KINASE"/>
    <property type="match status" value="1"/>
</dbReference>
<dbReference type="PANTHER" id="PTHR42833:SF4">
    <property type="entry name" value="URIDYLATE KINASE PUMPKIN, CHLOROPLASTIC"/>
    <property type="match status" value="1"/>
</dbReference>
<dbReference type="Pfam" id="PF00696">
    <property type="entry name" value="AA_kinase"/>
    <property type="match status" value="1"/>
</dbReference>
<dbReference type="PIRSF" id="PIRSF005650">
    <property type="entry name" value="Uridylate_kin"/>
    <property type="match status" value="1"/>
</dbReference>
<dbReference type="SUPFAM" id="SSF53633">
    <property type="entry name" value="Carbamate kinase-like"/>
    <property type="match status" value="1"/>
</dbReference>
<organism>
    <name type="scientific">Shewanella sp. (strain ANA-3)</name>
    <dbReference type="NCBI Taxonomy" id="94122"/>
    <lineage>
        <taxon>Bacteria</taxon>
        <taxon>Pseudomonadati</taxon>
        <taxon>Pseudomonadota</taxon>
        <taxon>Gammaproteobacteria</taxon>
        <taxon>Alteromonadales</taxon>
        <taxon>Shewanellaceae</taxon>
        <taxon>Shewanella</taxon>
    </lineage>
</organism>
<gene>
    <name evidence="1" type="primary">pyrH</name>
    <name type="ordered locus">Shewana3_2813</name>
</gene>
<feature type="chain" id="PRO_1000054012" description="Uridylate kinase">
    <location>
        <begin position="1"/>
        <end position="242"/>
    </location>
</feature>
<feature type="region of interest" description="Involved in allosteric activation by GTP" evidence="1">
    <location>
        <begin position="23"/>
        <end position="28"/>
    </location>
</feature>
<feature type="binding site" evidence="1">
    <location>
        <begin position="15"/>
        <end position="18"/>
    </location>
    <ligand>
        <name>ATP</name>
        <dbReference type="ChEBI" id="CHEBI:30616"/>
    </ligand>
</feature>
<feature type="binding site" evidence="1">
    <location>
        <position position="57"/>
    </location>
    <ligand>
        <name>UMP</name>
        <dbReference type="ChEBI" id="CHEBI:57865"/>
    </ligand>
</feature>
<feature type="binding site" evidence="1">
    <location>
        <position position="58"/>
    </location>
    <ligand>
        <name>ATP</name>
        <dbReference type="ChEBI" id="CHEBI:30616"/>
    </ligand>
</feature>
<feature type="binding site" evidence="1">
    <location>
        <position position="62"/>
    </location>
    <ligand>
        <name>ATP</name>
        <dbReference type="ChEBI" id="CHEBI:30616"/>
    </ligand>
</feature>
<feature type="binding site" evidence="1">
    <location>
        <position position="77"/>
    </location>
    <ligand>
        <name>UMP</name>
        <dbReference type="ChEBI" id="CHEBI:57865"/>
    </ligand>
</feature>
<feature type="binding site" evidence="1">
    <location>
        <begin position="138"/>
        <end position="145"/>
    </location>
    <ligand>
        <name>UMP</name>
        <dbReference type="ChEBI" id="CHEBI:57865"/>
    </ligand>
</feature>
<feature type="binding site" evidence="1">
    <location>
        <position position="165"/>
    </location>
    <ligand>
        <name>ATP</name>
        <dbReference type="ChEBI" id="CHEBI:30616"/>
    </ligand>
</feature>
<feature type="binding site" evidence="1">
    <location>
        <position position="171"/>
    </location>
    <ligand>
        <name>ATP</name>
        <dbReference type="ChEBI" id="CHEBI:30616"/>
    </ligand>
</feature>
<feature type="binding site" evidence="1">
    <location>
        <position position="174"/>
    </location>
    <ligand>
        <name>ATP</name>
        <dbReference type="ChEBI" id="CHEBI:30616"/>
    </ligand>
</feature>
<protein>
    <recommendedName>
        <fullName evidence="1">Uridylate kinase</fullName>
        <shortName evidence="1">UK</shortName>
        <ecNumber evidence="1">2.7.4.22</ecNumber>
    </recommendedName>
    <alternativeName>
        <fullName evidence="1">Uridine monophosphate kinase</fullName>
        <shortName evidence="1">UMP kinase</shortName>
        <shortName evidence="1">UMPK</shortName>
    </alternativeName>
</protein>
<reference key="1">
    <citation type="submission" date="2006-09" db="EMBL/GenBank/DDBJ databases">
        <title>Complete sequence of chromosome 1 of Shewanella sp. ANA-3.</title>
        <authorList>
            <person name="Copeland A."/>
            <person name="Lucas S."/>
            <person name="Lapidus A."/>
            <person name="Barry K."/>
            <person name="Detter J.C."/>
            <person name="Glavina del Rio T."/>
            <person name="Hammon N."/>
            <person name="Israni S."/>
            <person name="Dalin E."/>
            <person name="Tice H."/>
            <person name="Pitluck S."/>
            <person name="Chertkov O."/>
            <person name="Brettin T."/>
            <person name="Bruce D."/>
            <person name="Han C."/>
            <person name="Tapia R."/>
            <person name="Gilna P."/>
            <person name="Schmutz J."/>
            <person name="Larimer F."/>
            <person name="Land M."/>
            <person name="Hauser L."/>
            <person name="Kyrpides N."/>
            <person name="Kim E."/>
            <person name="Newman D."/>
            <person name="Salticov C."/>
            <person name="Konstantinidis K."/>
            <person name="Klappenback J."/>
            <person name="Tiedje J."/>
            <person name="Richardson P."/>
        </authorList>
    </citation>
    <scope>NUCLEOTIDE SEQUENCE [LARGE SCALE GENOMIC DNA]</scope>
    <source>
        <strain>ANA-3</strain>
    </source>
</reference>
<sequence>MSTNPKPAFRRILLKLSGEALMGDEGFGIDPKVLDRMAQEVKELVELGIQVGVVIGGGNLFRGEGLAKAGMNRVVGDHMGMLATVMNGLAMRDALHRAYVNARLMSAIPLKGVCDDYNWAEAISLLKSGRVVIFAAGTGNPFCTTDSAACLRGIEIEAEVVLKGTKVDGVYSDDPMKNPEAVKYDELSYTEVLDKELKVMDLAAFTMARDHDMPILVFNMNKPGALRRVVMGEEEGTLIKAK</sequence>
<comment type="function">
    <text evidence="1">Catalyzes the reversible phosphorylation of UMP to UDP.</text>
</comment>
<comment type="catalytic activity">
    <reaction evidence="1">
        <text>UMP + ATP = UDP + ADP</text>
        <dbReference type="Rhea" id="RHEA:24400"/>
        <dbReference type="ChEBI" id="CHEBI:30616"/>
        <dbReference type="ChEBI" id="CHEBI:57865"/>
        <dbReference type="ChEBI" id="CHEBI:58223"/>
        <dbReference type="ChEBI" id="CHEBI:456216"/>
        <dbReference type="EC" id="2.7.4.22"/>
    </reaction>
</comment>
<comment type="activity regulation">
    <text evidence="1">Allosterically activated by GTP. Inhibited by UTP.</text>
</comment>
<comment type="pathway">
    <text evidence="1">Pyrimidine metabolism; CTP biosynthesis via de novo pathway; UDP from UMP (UMPK route): step 1/1.</text>
</comment>
<comment type="subunit">
    <text evidence="1">Homohexamer.</text>
</comment>
<comment type="subcellular location">
    <subcellularLocation>
        <location evidence="1">Cytoplasm</location>
    </subcellularLocation>
</comment>
<comment type="similarity">
    <text evidence="1">Belongs to the UMP kinase family.</text>
</comment>
<name>PYRH_SHESA</name>
<accession>A0KZ21</accession>
<proteinExistence type="inferred from homology"/>
<keyword id="KW-0021">Allosteric enzyme</keyword>
<keyword id="KW-0067">ATP-binding</keyword>
<keyword id="KW-0963">Cytoplasm</keyword>
<keyword id="KW-0418">Kinase</keyword>
<keyword id="KW-0547">Nucleotide-binding</keyword>
<keyword id="KW-0665">Pyrimidine biosynthesis</keyword>
<keyword id="KW-0808">Transferase</keyword>
<evidence type="ECO:0000255" key="1">
    <source>
        <dbReference type="HAMAP-Rule" id="MF_01220"/>
    </source>
</evidence>